<organism>
    <name type="scientific">Dictyostelium discoideum</name>
    <name type="common">Social amoeba</name>
    <dbReference type="NCBI Taxonomy" id="44689"/>
    <lineage>
        <taxon>Eukaryota</taxon>
        <taxon>Amoebozoa</taxon>
        <taxon>Evosea</taxon>
        <taxon>Eumycetozoa</taxon>
        <taxon>Dictyostelia</taxon>
        <taxon>Dictyosteliales</taxon>
        <taxon>Dictyosteliaceae</taxon>
        <taxon>Dictyostelium</taxon>
    </lineage>
</organism>
<reference key="1">
    <citation type="journal article" date="2002" name="Nature">
        <title>Sequence and analysis of chromosome 2 of Dictyostelium discoideum.</title>
        <authorList>
            <person name="Gloeckner G."/>
            <person name="Eichinger L."/>
            <person name="Szafranski K."/>
            <person name="Pachebat J.A."/>
            <person name="Bankier A.T."/>
            <person name="Dear P.H."/>
            <person name="Lehmann R."/>
            <person name="Baumgart C."/>
            <person name="Parra G."/>
            <person name="Abril J.F."/>
            <person name="Guigo R."/>
            <person name="Kumpf K."/>
            <person name="Tunggal B."/>
            <person name="Cox E.C."/>
            <person name="Quail M.A."/>
            <person name="Platzer M."/>
            <person name="Rosenthal A."/>
            <person name="Noegel A.A."/>
        </authorList>
    </citation>
    <scope>NUCLEOTIDE SEQUENCE [LARGE SCALE GENOMIC DNA]</scope>
    <source>
        <strain>AX4</strain>
    </source>
</reference>
<reference key="2">
    <citation type="journal article" date="2005" name="Nature">
        <title>The genome of the social amoeba Dictyostelium discoideum.</title>
        <authorList>
            <person name="Eichinger L."/>
            <person name="Pachebat J.A."/>
            <person name="Gloeckner G."/>
            <person name="Rajandream M.A."/>
            <person name="Sucgang R."/>
            <person name="Berriman M."/>
            <person name="Song J."/>
            <person name="Olsen R."/>
            <person name="Szafranski K."/>
            <person name="Xu Q."/>
            <person name="Tunggal B."/>
            <person name="Kummerfeld S."/>
            <person name="Madera M."/>
            <person name="Konfortov B.A."/>
            <person name="Rivero F."/>
            <person name="Bankier A.T."/>
            <person name="Lehmann R."/>
            <person name="Hamlin N."/>
            <person name="Davies R."/>
            <person name="Gaudet P."/>
            <person name="Fey P."/>
            <person name="Pilcher K."/>
            <person name="Chen G."/>
            <person name="Saunders D."/>
            <person name="Sodergren E.J."/>
            <person name="Davis P."/>
            <person name="Kerhornou A."/>
            <person name="Nie X."/>
            <person name="Hall N."/>
            <person name="Anjard C."/>
            <person name="Hemphill L."/>
            <person name="Bason N."/>
            <person name="Farbrother P."/>
            <person name="Desany B."/>
            <person name="Just E."/>
            <person name="Morio T."/>
            <person name="Rost R."/>
            <person name="Churcher C.M."/>
            <person name="Cooper J."/>
            <person name="Haydock S."/>
            <person name="van Driessche N."/>
            <person name="Cronin A."/>
            <person name="Goodhead I."/>
            <person name="Muzny D.M."/>
            <person name="Mourier T."/>
            <person name="Pain A."/>
            <person name="Lu M."/>
            <person name="Harper D."/>
            <person name="Lindsay R."/>
            <person name="Hauser H."/>
            <person name="James K.D."/>
            <person name="Quiles M."/>
            <person name="Madan Babu M."/>
            <person name="Saito T."/>
            <person name="Buchrieser C."/>
            <person name="Wardroper A."/>
            <person name="Felder M."/>
            <person name="Thangavelu M."/>
            <person name="Johnson D."/>
            <person name="Knights A."/>
            <person name="Loulseged H."/>
            <person name="Mungall K.L."/>
            <person name="Oliver K."/>
            <person name="Price C."/>
            <person name="Quail M.A."/>
            <person name="Urushihara H."/>
            <person name="Hernandez J."/>
            <person name="Rabbinowitsch E."/>
            <person name="Steffen D."/>
            <person name="Sanders M."/>
            <person name="Ma J."/>
            <person name="Kohara Y."/>
            <person name="Sharp S."/>
            <person name="Simmonds M.N."/>
            <person name="Spiegler S."/>
            <person name="Tivey A."/>
            <person name="Sugano S."/>
            <person name="White B."/>
            <person name="Walker D."/>
            <person name="Woodward J.R."/>
            <person name="Winckler T."/>
            <person name="Tanaka Y."/>
            <person name="Shaulsky G."/>
            <person name="Schleicher M."/>
            <person name="Weinstock G.M."/>
            <person name="Rosenthal A."/>
            <person name="Cox E.C."/>
            <person name="Chisholm R.L."/>
            <person name="Gibbs R.A."/>
            <person name="Loomis W.F."/>
            <person name="Platzer M."/>
            <person name="Kay R.R."/>
            <person name="Williams J.G."/>
            <person name="Dear P.H."/>
            <person name="Noegel A.A."/>
            <person name="Barrell B.G."/>
            <person name="Kuspa A."/>
        </authorList>
    </citation>
    <scope>NUCLEOTIDE SEQUENCE [LARGE SCALE GENOMIC DNA]</scope>
    <source>
        <strain>AX4</strain>
    </source>
</reference>
<gene>
    <name type="primary">rab5A</name>
    <name type="ORF">DDB_G0271984</name>
</gene>
<sequence>MNNNNKIFQFKLVLLGEAAVGKSSLVLRFVRGHFLDYQESTIGAAFLAQTVCLNDTTVKFEIWDTAGQERYHTLAPMYYRGAQAAIVVYDIRSEDSFERAIKWVKELQRQGSPNIVIALAGNKLDLAAKRKVETAEAQQYAEENGLLFMETSAKTSQNVNELFVEIAKKLPKTPTTRPGSGRVAIAPIDNGNTGKKNKCCN</sequence>
<comment type="function">
    <text evidence="1">Required for the fusion of plasma membranes and early endosomes.</text>
</comment>
<comment type="activity regulation">
    <text evidence="1">Regulated by guanine nucleotide exchange factors (GEFs) which promote the exchange of bound GDP for free GTP.</text>
</comment>
<comment type="subcellular location">
    <subcellularLocation>
        <location evidence="1">Cell membrane</location>
        <topology evidence="1">Lipid-anchor</topology>
        <orientation evidence="1">Cytoplasmic side</orientation>
    </subcellularLocation>
    <subcellularLocation>
        <location evidence="1">Endosome membrane</location>
        <topology evidence="1">Lipid-anchor</topology>
    </subcellularLocation>
</comment>
<comment type="similarity">
    <text evidence="3">Belongs to the small GTPase superfamily. Rab family.</text>
</comment>
<dbReference type="EMBL" id="AAFI02000007">
    <property type="protein sequence ID" value="EAL71426.1"/>
    <property type="molecule type" value="Genomic_DNA"/>
</dbReference>
<dbReference type="RefSeq" id="XP_645357.1">
    <property type="nucleotide sequence ID" value="XM_640265.1"/>
</dbReference>
<dbReference type="SMR" id="Q86JP3"/>
<dbReference type="FunCoup" id="Q86JP3">
    <property type="interactions" value="848"/>
</dbReference>
<dbReference type="STRING" id="44689.Q86JP3"/>
<dbReference type="PaxDb" id="44689-DDB0229401"/>
<dbReference type="EnsemblProtists" id="EAL71426">
    <property type="protein sequence ID" value="EAL71426"/>
    <property type="gene ID" value="DDB_G0271984"/>
</dbReference>
<dbReference type="GeneID" id="8618246"/>
<dbReference type="KEGG" id="ddi:DDB_G0271984"/>
<dbReference type="dictyBase" id="DDB_G0271984">
    <property type="gene designation" value="rab5A"/>
</dbReference>
<dbReference type="VEuPathDB" id="AmoebaDB:DDB_G0271984"/>
<dbReference type="eggNOG" id="KOG0092">
    <property type="taxonomic scope" value="Eukaryota"/>
</dbReference>
<dbReference type="HOGENOM" id="CLU_041217_10_2_1"/>
<dbReference type="InParanoid" id="Q86JP3"/>
<dbReference type="OMA" id="DEEGLMW"/>
<dbReference type="PhylomeDB" id="Q86JP3"/>
<dbReference type="Reactome" id="R-DDI-6798695">
    <property type="pathway name" value="Neutrophil degranulation"/>
</dbReference>
<dbReference type="Reactome" id="R-DDI-8873719">
    <property type="pathway name" value="RAB geranylgeranylation"/>
</dbReference>
<dbReference type="Reactome" id="R-DDI-8876198">
    <property type="pathway name" value="RAB GEFs exchange GTP for GDP on RABs"/>
</dbReference>
<dbReference type="PRO" id="PR:Q86JP3"/>
<dbReference type="Proteomes" id="UP000002195">
    <property type="component" value="Chromosome 2"/>
</dbReference>
<dbReference type="GO" id="GO:0005769">
    <property type="term" value="C:early endosome"/>
    <property type="evidence" value="ECO:0000250"/>
    <property type="project" value="UniProtKB"/>
</dbReference>
<dbReference type="GO" id="GO:0032009">
    <property type="term" value="C:early phagosome"/>
    <property type="evidence" value="ECO:0000314"/>
    <property type="project" value="dictyBase"/>
</dbReference>
<dbReference type="GO" id="GO:0030139">
    <property type="term" value="C:endocytic vesicle"/>
    <property type="evidence" value="ECO:0000318"/>
    <property type="project" value="GO_Central"/>
</dbReference>
<dbReference type="GO" id="GO:0012505">
    <property type="term" value="C:endomembrane system"/>
    <property type="evidence" value="ECO:0000318"/>
    <property type="project" value="GO_Central"/>
</dbReference>
<dbReference type="GO" id="GO:0010008">
    <property type="term" value="C:endosome membrane"/>
    <property type="evidence" value="ECO:0007669"/>
    <property type="project" value="UniProtKB-SubCell"/>
</dbReference>
<dbReference type="GO" id="GO:0005811">
    <property type="term" value="C:lipid droplet"/>
    <property type="evidence" value="ECO:0007005"/>
    <property type="project" value="dictyBase"/>
</dbReference>
<dbReference type="GO" id="GO:0044354">
    <property type="term" value="C:macropinosome"/>
    <property type="evidence" value="ECO:0000314"/>
    <property type="project" value="dictyBase"/>
</dbReference>
<dbReference type="GO" id="GO:0140220">
    <property type="term" value="C:pathogen-containing vacuole"/>
    <property type="evidence" value="ECO:0000314"/>
    <property type="project" value="dictyBase"/>
</dbReference>
<dbReference type="GO" id="GO:0005886">
    <property type="term" value="C:plasma membrane"/>
    <property type="evidence" value="ECO:0000314"/>
    <property type="project" value="dictyBase"/>
</dbReference>
<dbReference type="GO" id="GO:0005525">
    <property type="term" value="F:GTP binding"/>
    <property type="evidence" value="ECO:0007669"/>
    <property type="project" value="UniProtKB-KW"/>
</dbReference>
<dbReference type="GO" id="GO:0003924">
    <property type="term" value="F:GTPase activity"/>
    <property type="evidence" value="ECO:0000318"/>
    <property type="project" value="GO_Central"/>
</dbReference>
<dbReference type="GO" id="GO:0006886">
    <property type="term" value="P:intracellular protein transport"/>
    <property type="evidence" value="ECO:0000318"/>
    <property type="project" value="GO_Central"/>
</dbReference>
<dbReference type="GO" id="GO:1905162">
    <property type="term" value="P:regulation of phagosome maturation"/>
    <property type="evidence" value="ECO:0000315"/>
    <property type="project" value="dictyBase"/>
</dbReference>
<dbReference type="CDD" id="cd01860">
    <property type="entry name" value="Rab5_related"/>
    <property type="match status" value="1"/>
</dbReference>
<dbReference type="FunFam" id="3.40.50.300:FF:001667">
    <property type="entry name" value="Rab family gtpase"/>
    <property type="match status" value="1"/>
</dbReference>
<dbReference type="Gene3D" id="3.40.50.300">
    <property type="entry name" value="P-loop containing nucleotide triphosphate hydrolases"/>
    <property type="match status" value="1"/>
</dbReference>
<dbReference type="InterPro" id="IPR027417">
    <property type="entry name" value="P-loop_NTPase"/>
</dbReference>
<dbReference type="InterPro" id="IPR005225">
    <property type="entry name" value="Small_GTP-bd"/>
</dbReference>
<dbReference type="InterPro" id="IPR001806">
    <property type="entry name" value="Small_GTPase"/>
</dbReference>
<dbReference type="NCBIfam" id="TIGR00231">
    <property type="entry name" value="small_GTP"/>
    <property type="match status" value="1"/>
</dbReference>
<dbReference type="PANTHER" id="PTHR47978">
    <property type="match status" value="1"/>
</dbReference>
<dbReference type="Pfam" id="PF00071">
    <property type="entry name" value="Ras"/>
    <property type="match status" value="1"/>
</dbReference>
<dbReference type="PRINTS" id="PR00449">
    <property type="entry name" value="RASTRNSFRMNG"/>
</dbReference>
<dbReference type="SMART" id="SM00175">
    <property type="entry name" value="RAB"/>
    <property type="match status" value="1"/>
</dbReference>
<dbReference type="SMART" id="SM00176">
    <property type="entry name" value="RAN"/>
    <property type="match status" value="1"/>
</dbReference>
<dbReference type="SMART" id="SM00173">
    <property type="entry name" value="RAS"/>
    <property type="match status" value="1"/>
</dbReference>
<dbReference type="SMART" id="SM00174">
    <property type="entry name" value="RHO"/>
    <property type="match status" value="1"/>
</dbReference>
<dbReference type="SUPFAM" id="SSF52540">
    <property type="entry name" value="P-loop containing nucleoside triphosphate hydrolases"/>
    <property type="match status" value="1"/>
</dbReference>
<dbReference type="PROSITE" id="PS51419">
    <property type="entry name" value="RAB"/>
    <property type="match status" value="1"/>
</dbReference>
<keyword id="KW-1003">Cell membrane</keyword>
<keyword id="KW-0967">Endosome</keyword>
<keyword id="KW-0342">GTP-binding</keyword>
<keyword id="KW-0449">Lipoprotein</keyword>
<keyword id="KW-0472">Membrane</keyword>
<keyword id="KW-0547">Nucleotide-binding</keyword>
<keyword id="KW-0636">Prenylation</keyword>
<keyword id="KW-0653">Protein transport</keyword>
<keyword id="KW-1185">Reference proteome</keyword>
<keyword id="KW-0813">Transport</keyword>
<proteinExistence type="inferred from homology"/>
<protein>
    <recommendedName>
        <fullName>Ras-related protein Rab-5A</fullName>
    </recommendedName>
</protein>
<accession>Q86JP3</accession>
<accession>Q55AA9</accession>
<evidence type="ECO:0000250" key="1"/>
<evidence type="ECO:0000250" key="2">
    <source>
        <dbReference type="UniProtKB" id="P20339"/>
    </source>
</evidence>
<evidence type="ECO:0000305" key="3"/>
<name>RAB5A_DICDI</name>
<feature type="chain" id="PRO_0000328264" description="Ras-related protein Rab-5A">
    <location>
        <begin position="1"/>
        <end position="201"/>
    </location>
</feature>
<feature type="short sequence motif" description="Effector region" evidence="1">
    <location>
        <begin position="38"/>
        <end position="46"/>
    </location>
</feature>
<feature type="binding site" evidence="2">
    <location>
        <begin position="16"/>
        <end position="24"/>
    </location>
    <ligand>
        <name>GTP</name>
        <dbReference type="ChEBI" id="CHEBI:37565"/>
    </ligand>
</feature>
<feature type="binding site" evidence="2">
    <location>
        <begin position="35"/>
        <end position="41"/>
    </location>
    <ligand>
        <name>GTP</name>
        <dbReference type="ChEBI" id="CHEBI:37565"/>
    </ligand>
</feature>
<feature type="binding site" evidence="2">
    <location>
        <begin position="64"/>
        <end position="68"/>
    </location>
    <ligand>
        <name>GTP</name>
        <dbReference type="ChEBI" id="CHEBI:37565"/>
    </ligand>
</feature>
<feature type="binding site" evidence="2">
    <location>
        <begin position="122"/>
        <end position="125"/>
    </location>
    <ligand>
        <name>GTP</name>
        <dbReference type="ChEBI" id="CHEBI:37565"/>
    </ligand>
</feature>
<feature type="binding site" evidence="2">
    <location>
        <begin position="152"/>
        <end position="154"/>
    </location>
    <ligand>
        <name>GTP</name>
        <dbReference type="ChEBI" id="CHEBI:37565"/>
    </ligand>
</feature>
<feature type="lipid moiety-binding region" description="S-geranylgeranyl cysteine" evidence="1">
    <location>
        <position position="199"/>
    </location>
</feature>
<feature type="lipid moiety-binding region" description="S-geranylgeranyl cysteine" evidence="1">
    <location>
        <position position="200"/>
    </location>
</feature>